<feature type="chain" id="PRO_0000141311" description="Cobyric acid synthase">
    <location>
        <begin position="1"/>
        <end position="497"/>
    </location>
</feature>
<feature type="domain" description="GATase cobBQ-type" evidence="1">
    <location>
        <begin position="257"/>
        <end position="431"/>
    </location>
</feature>
<feature type="active site" description="Nucleophile" evidence="1">
    <location>
        <position position="338"/>
    </location>
</feature>
<feature type="active site" evidence="1">
    <location>
        <position position="423"/>
    </location>
</feature>
<keyword id="KW-0169">Cobalamin biosynthesis</keyword>
<keyword id="KW-0315">Glutamine amidotransferase</keyword>
<keyword id="KW-1185">Reference proteome</keyword>
<protein>
    <recommendedName>
        <fullName evidence="1">Cobyric acid synthase</fullName>
    </recommendedName>
</protein>
<evidence type="ECO:0000255" key="1">
    <source>
        <dbReference type="HAMAP-Rule" id="MF_00028"/>
    </source>
</evidence>
<sequence length="497" mass="52912">MSGALLVAGTSSDAGKSVVVAGLCRLLARRGVRVAPFKAQNMSNNSAVTVEGGEIGRAQAIQARAAGLEPSVRFNPILLKPGSDRTSQLVIKGQVAESVTATSYVQHRDRLAALVLNELTCLRDEFDAVICEGAGSPAEINLRATDLANMGLARAADLAVILVGDIDRGGLLAHLFGTVAVLDPQDQALIAGFVVNKFRGDPALLQPGLRRLHDITGRPTYGVLPYADRLWLDAEDSLSVLAHRVVGAPDPPLGDDWLRVAAVRLPRISNSTDVEALACEPGVLVRWVSEPSDVADADLVVIPGSKATVADLSWLRERGLAAAITAHAAAGRPVLGICGGFQMLCRRIDDRVESGAGEVAGLGLLDADIAFHPAKTLRRWQRPLAGYEIHHGRVSRCAEHSWFDSDAEPQGLVRGAVFGTHWHGLLDNDDFRRAWLVRVADAAGRRFVPGDTDVAARRDAQLDLAADLLAAHLDVDAVLGLLDGPPPRPRLATRLCR</sequence>
<name>COBQ_MYCPA</name>
<accession>Q73VS8</accession>
<proteinExistence type="inferred from homology"/>
<dbReference type="EMBL" id="AE016958">
    <property type="protein sequence ID" value="AAS05250.1"/>
    <property type="molecule type" value="Genomic_DNA"/>
</dbReference>
<dbReference type="RefSeq" id="WP_003875118.1">
    <property type="nucleotide sequence ID" value="NZ_CP106873.1"/>
</dbReference>
<dbReference type="SMR" id="Q73VS8"/>
<dbReference type="STRING" id="262316.MAP_2933c"/>
<dbReference type="KEGG" id="mpa:MAP_2933c"/>
<dbReference type="eggNOG" id="COG1492">
    <property type="taxonomic scope" value="Bacteria"/>
</dbReference>
<dbReference type="HOGENOM" id="CLU_019250_2_2_11"/>
<dbReference type="UniPathway" id="UPA00148"/>
<dbReference type="Proteomes" id="UP000000580">
    <property type="component" value="Chromosome"/>
</dbReference>
<dbReference type="GO" id="GO:0015420">
    <property type="term" value="F:ABC-type vitamin B12 transporter activity"/>
    <property type="evidence" value="ECO:0007669"/>
    <property type="project" value="UniProtKB-UniRule"/>
</dbReference>
<dbReference type="GO" id="GO:0003824">
    <property type="term" value="F:catalytic activity"/>
    <property type="evidence" value="ECO:0007669"/>
    <property type="project" value="InterPro"/>
</dbReference>
<dbReference type="GO" id="GO:0009236">
    <property type="term" value="P:cobalamin biosynthetic process"/>
    <property type="evidence" value="ECO:0007669"/>
    <property type="project" value="UniProtKB-UniRule"/>
</dbReference>
<dbReference type="CDD" id="cd01750">
    <property type="entry name" value="GATase1_CobQ"/>
    <property type="match status" value="1"/>
</dbReference>
<dbReference type="Gene3D" id="3.40.50.880">
    <property type="match status" value="1"/>
</dbReference>
<dbReference type="Gene3D" id="3.40.50.300">
    <property type="entry name" value="P-loop containing nucleotide triphosphate hydrolases"/>
    <property type="match status" value="1"/>
</dbReference>
<dbReference type="HAMAP" id="MF_00028">
    <property type="entry name" value="CobQ"/>
    <property type="match status" value="1"/>
</dbReference>
<dbReference type="InterPro" id="IPR029062">
    <property type="entry name" value="Class_I_gatase-like"/>
</dbReference>
<dbReference type="InterPro" id="IPR002586">
    <property type="entry name" value="CobQ/CobB/MinD/ParA_Nub-bd_dom"/>
</dbReference>
<dbReference type="InterPro" id="IPR033949">
    <property type="entry name" value="CobQ_GATase1"/>
</dbReference>
<dbReference type="InterPro" id="IPR004459">
    <property type="entry name" value="CobQ_synth"/>
</dbReference>
<dbReference type="InterPro" id="IPR011698">
    <property type="entry name" value="GATase_3"/>
</dbReference>
<dbReference type="InterPro" id="IPR027417">
    <property type="entry name" value="P-loop_NTPase"/>
</dbReference>
<dbReference type="NCBIfam" id="TIGR00313">
    <property type="entry name" value="cobQ"/>
    <property type="match status" value="1"/>
</dbReference>
<dbReference type="NCBIfam" id="NF001989">
    <property type="entry name" value="PRK00784.1"/>
    <property type="match status" value="1"/>
</dbReference>
<dbReference type="PANTHER" id="PTHR21343:SF1">
    <property type="entry name" value="COBYRIC ACID SYNTHASE"/>
    <property type="match status" value="1"/>
</dbReference>
<dbReference type="PANTHER" id="PTHR21343">
    <property type="entry name" value="DETHIOBIOTIN SYNTHETASE"/>
    <property type="match status" value="1"/>
</dbReference>
<dbReference type="Pfam" id="PF01656">
    <property type="entry name" value="CbiA"/>
    <property type="match status" value="1"/>
</dbReference>
<dbReference type="Pfam" id="PF07685">
    <property type="entry name" value="GATase_3"/>
    <property type="match status" value="1"/>
</dbReference>
<dbReference type="SUPFAM" id="SSF52317">
    <property type="entry name" value="Class I glutamine amidotransferase-like"/>
    <property type="match status" value="1"/>
</dbReference>
<dbReference type="SUPFAM" id="SSF52540">
    <property type="entry name" value="P-loop containing nucleoside triphosphate hydrolases"/>
    <property type="match status" value="1"/>
</dbReference>
<dbReference type="PROSITE" id="PS51274">
    <property type="entry name" value="GATASE_COBBQ"/>
    <property type="match status" value="1"/>
</dbReference>
<comment type="function">
    <text evidence="1">Catalyzes amidations at positions B, D, E, and G on adenosylcobyrinic A,C-diamide. NH(2) groups are provided by glutamine, and one molecule of ATP is hydrogenolyzed for each amidation.</text>
</comment>
<comment type="pathway">
    <text evidence="1">Cofactor biosynthesis; adenosylcobalamin biosynthesis.</text>
</comment>
<comment type="similarity">
    <text evidence="1">Belongs to the CobB/CobQ family. CobQ subfamily.</text>
</comment>
<reference key="1">
    <citation type="journal article" date="2005" name="Proc. Natl. Acad. Sci. U.S.A.">
        <title>The complete genome sequence of Mycobacterium avium subspecies paratuberculosis.</title>
        <authorList>
            <person name="Li L."/>
            <person name="Bannantine J.P."/>
            <person name="Zhang Q."/>
            <person name="Amonsin A."/>
            <person name="May B.J."/>
            <person name="Alt D."/>
            <person name="Banerji N."/>
            <person name="Kanjilal S."/>
            <person name="Kapur V."/>
        </authorList>
    </citation>
    <scope>NUCLEOTIDE SEQUENCE [LARGE SCALE GENOMIC DNA]</scope>
    <source>
        <strain>ATCC BAA-968 / K-10</strain>
    </source>
</reference>
<organism>
    <name type="scientific">Mycolicibacterium paratuberculosis (strain ATCC BAA-968 / K-10)</name>
    <name type="common">Mycobacterium paratuberculosis</name>
    <dbReference type="NCBI Taxonomy" id="262316"/>
    <lineage>
        <taxon>Bacteria</taxon>
        <taxon>Bacillati</taxon>
        <taxon>Actinomycetota</taxon>
        <taxon>Actinomycetes</taxon>
        <taxon>Mycobacteriales</taxon>
        <taxon>Mycobacteriaceae</taxon>
        <taxon>Mycobacterium</taxon>
        <taxon>Mycobacterium avium complex (MAC)</taxon>
    </lineage>
</organism>
<gene>
    <name evidence="1" type="primary">cobQ</name>
    <name type="ordered locus">MAP_2933c</name>
</gene>